<keyword id="KW-0150">Chloroplast</keyword>
<keyword id="KW-0472">Membrane</keyword>
<keyword id="KW-0602">Photosynthesis</keyword>
<keyword id="KW-0603">Photosystem I</keyword>
<keyword id="KW-0934">Plastid</keyword>
<keyword id="KW-1185">Reference proteome</keyword>
<keyword id="KW-0793">Thylakoid</keyword>
<keyword id="KW-0809">Transit peptide</keyword>
<keyword id="KW-0812">Transmembrane</keyword>
<keyword id="KW-1133">Transmembrane helix</keyword>
<organism>
    <name type="scientific">Oryza sativa subsp. japonica</name>
    <name type="common">Rice</name>
    <dbReference type="NCBI Taxonomy" id="39947"/>
    <lineage>
        <taxon>Eukaryota</taxon>
        <taxon>Viridiplantae</taxon>
        <taxon>Streptophyta</taxon>
        <taxon>Embryophyta</taxon>
        <taxon>Tracheophyta</taxon>
        <taxon>Spermatophyta</taxon>
        <taxon>Magnoliopsida</taxon>
        <taxon>Liliopsida</taxon>
        <taxon>Poales</taxon>
        <taxon>Poaceae</taxon>
        <taxon>BOP clade</taxon>
        <taxon>Oryzoideae</taxon>
        <taxon>Oryzeae</taxon>
        <taxon>Oryzinae</taxon>
        <taxon>Oryza</taxon>
        <taxon>Oryza sativa</taxon>
    </lineage>
</organism>
<feature type="transit peptide" description="Chloroplast">
    <location>
        <begin position="1"/>
        <end position="47"/>
    </location>
</feature>
<feature type="chain" id="PRO_0000029418" description="Photosystem I reaction center subunit VI, chloroplastic">
    <location>
        <begin position="48"/>
        <end position="142"/>
    </location>
</feature>
<feature type="transmembrane region" description="Helical" evidence="2">
    <location>
        <begin position="101"/>
        <end position="119"/>
    </location>
</feature>
<protein>
    <recommendedName>
        <fullName>Photosystem I reaction center subunit VI, chloroplastic</fullName>
        <shortName>PSI-H</shortName>
    </recommendedName>
    <alternativeName>
        <fullName>Light-harvesting complex I 11 kDa protein</fullName>
    </alternativeName>
    <alternativeName>
        <fullName>Protein GOS5</fullName>
    </alternativeName>
</protein>
<gene>
    <name type="primary">PSAH</name>
    <name type="synonym">GOS5</name>
    <name type="ordered locus">Os05g0560000</name>
    <name type="ordered locus">LOC_Os05g48630</name>
    <name type="ORF">OJ1115_B06.3</name>
    <name type="ORF">OsJ_018737</name>
    <name evidence="4" type="ORF">OsJ_19524</name>
    <name type="ORF">OSJNBa0001A14.18</name>
</gene>
<accession>Q0DG05</accession>
<accession>B7E4T5</accession>
<accession>P22181</accession>
<accession>Q6AT29</accession>
<accession>Q9SBB9</accession>
<comment type="function">
    <text>Possible role could be the docking of the LHC I antenna complex to the core complex.</text>
</comment>
<comment type="subcellular location">
    <subcellularLocation>
        <location evidence="1">Plastid</location>
        <location evidence="1">Chloroplast thylakoid membrane</location>
        <topology evidence="1">Single-pass membrane protein</topology>
    </subcellularLocation>
</comment>
<comment type="similarity">
    <text evidence="3">Belongs to the psaH family.</text>
</comment>
<name>PSAH_ORYSJ</name>
<reference key="1">
    <citation type="submission" date="1998-09" db="EMBL/GenBank/DDBJ databases">
        <title>Molecular cloning and characterization of shoot specific GOS5 (PSI-H) in rice.</title>
        <authorList>
            <person name="Lee J.-S."/>
            <person name="Seok S.-J."/>
            <person name="Eun M.-Y."/>
        </authorList>
    </citation>
    <scope>NUCLEOTIDE SEQUENCE [MRNA]</scope>
    <source>
        <strain>cv. Ilpoom</strain>
        <tissue>Leaf</tissue>
    </source>
</reference>
<reference key="2">
    <citation type="journal article" date="2005" name="Mol. Genet. Genomics">
        <title>A fine physical map of the rice chromosome 5.</title>
        <authorList>
            <person name="Cheng C.-H."/>
            <person name="Chung M.C."/>
            <person name="Liu S.-M."/>
            <person name="Chen S.-K."/>
            <person name="Kao F.Y."/>
            <person name="Lin S.-J."/>
            <person name="Hsiao S.-H."/>
            <person name="Tseng I.C."/>
            <person name="Hsing Y.-I.C."/>
            <person name="Wu H.-P."/>
            <person name="Chen C.-S."/>
            <person name="Shaw J.-F."/>
            <person name="Wu J."/>
            <person name="Matsumoto T."/>
            <person name="Sasaki T."/>
            <person name="Chen H.-C."/>
            <person name="Chow T.-Y."/>
        </authorList>
    </citation>
    <scope>NUCLEOTIDE SEQUENCE [LARGE SCALE GENOMIC DNA]</scope>
    <source>
        <strain>cv. Nipponbare</strain>
    </source>
</reference>
<reference key="3">
    <citation type="journal article" date="2005" name="Nature">
        <title>The map-based sequence of the rice genome.</title>
        <authorList>
            <consortium name="International rice genome sequencing project (IRGSP)"/>
        </authorList>
    </citation>
    <scope>NUCLEOTIDE SEQUENCE [LARGE SCALE GENOMIC DNA]</scope>
    <source>
        <strain>cv. Nipponbare</strain>
    </source>
</reference>
<reference key="4">
    <citation type="journal article" date="2008" name="Nucleic Acids Res.">
        <title>The rice annotation project database (RAP-DB): 2008 update.</title>
        <authorList>
            <consortium name="The rice annotation project (RAP)"/>
        </authorList>
    </citation>
    <scope>GENOME REANNOTATION</scope>
    <source>
        <strain>cv. Nipponbare</strain>
    </source>
</reference>
<reference key="5">
    <citation type="journal article" date="2013" name="Rice">
        <title>Improvement of the Oryza sativa Nipponbare reference genome using next generation sequence and optical map data.</title>
        <authorList>
            <person name="Kawahara Y."/>
            <person name="de la Bastide M."/>
            <person name="Hamilton J.P."/>
            <person name="Kanamori H."/>
            <person name="McCombie W.R."/>
            <person name="Ouyang S."/>
            <person name="Schwartz D.C."/>
            <person name="Tanaka T."/>
            <person name="Wu J."/>
            <person name="Zhou S."/>
            <person name="Childs K.L."/>
            <person name="Davidson R.M."/>
            <person name="Lin H."/>
            <person name="Quesada-Ocampo L."/>
            <person name="Vaillancourt B."/>
            <person name="Sakai H."/>
            <person name="Lee S.S."/>
            <person name="Kim J."/>
            <person name="Numa H."/>
            <person name="Itoh T."/>
            <person name="Buell C.R."/>
            <person name="Matsumoto T."/>
        </authorList>
    </citation>
    <scope>GENOME REANNOTATION</scope>
    <source>
        <strain>cv. Nipponbare</strain>
    </source>
</reference>
<reference key="6">
    <citation type="journal article" date="2005" name="PLoS Biol.">
        <title>The genomes of Oryza sativa: a history of duplications.</title>
        <authorList>
            <person name="Yu J."/>
            <person name="Wang J."/>
            <person name="Lin W."/>
            <person name="Li S."/>
            <person name="Li H."/>
            <person name="Zhou J."/>
            <person name="Ni P."/>
            <person name="Dong W."/>
            <person name="Hu S."/>
            <person name="Zeng C."/>
            <person name="Zhang J."/>
            <person name="Zhang Y."/>
            <person name="Li R."/>
            <person name="Xu Z."/>
            <person name="Li S."/>
            <person name="Li X."/>
            <person name="Zheng H."/>
            <person name="Cong L."/>
            <person name="Lin L."/>
            <person name="Yin J."/>
            <person name="Geng J."/>
            <person name="Li G."/>
            <person name="Shi J."/>
            <person name="Liu J."/>
            <person name="Lv H."/>
            <person name="Li J."/>
            <person name="Wang J."/>
            <person name="Deng Y."/>
            <person name="Ran L."/>
            <person name="Shi X."/>
            <person name="Wang X."/>
            <person name="Wu Q."/>
            <person name="Li C."/>
            <person name="Ren X."/>
            <person name="Wang J."/>
            <person name="Wang X."/>
            <person name="Li D."/>
            <person name="Liu D."/>
            <person name="Zhang X."/>
            <person name="Ji Z."/>
            <person name="Zhao W."/>
            <person name="Sun Y."/>
            <person name="Zhang Z."/>
            <person name="Bao J."/>
            <person name="Han Y."/>
            <person name="Dong L."/>
            <person name="Ji J."/>
            <person name="Chen P."/>
            <person name="Wu S."/>
            <person name="Liu J."/>
            <person name="Xiao Y."/>
            <person name="Bu D."/>
            <person name="Tan J."/>
            <person name="Yang L."/>
            <person name="Ye C."/>
            <person name="Zhang J."/>
            <person name="Xu J."/>
            <person name="Zhou Y."/>
            <person name="Yu Y."/>
            <person name="Zhang B."/>
            <person name="Zhuang S."/>
            <person name="Wei H."/>
            <person name="Liu B."/>
            <person name="Lei M."/>
            <person name="Yu H."/>
            <person name="Li Y."/>
            <person name="Xu H."/>
            <person name="Wei S."/>
            <person name="He X."/>
            <person name="Fang L."/>
            <person name="Zhang Z."/>
            <person name="Zhang Y."/>
            <person name="Huang X."/>
            <person name="Su Z."/>
            <person name="Tong W."/>
            <person name="Li J."/>
            <person name="Tong Z."/>
            <person name="Li S."/>
            <person name="Ye J."/>
            <person name="Wang L."/>
            <person name="Fang L."/>
            <person name="Lei T."/>
            <person name="Chen C.-S."/>
            <person name="Chen H.-C."/>
            <person name="Xu Z."/>
            <person name="Li H."/>
            <person name="Huang H."/>
            <person name="Zhang F."/>
            <person name="Xu H."/>
            <person name="Li N."/>
            <person name="Zhao C."/>
            <person name="Li S."/>
            <person name="Dong L."/>
            <person name="Huang Y."/>
            <person name="Li L."/>
            <person name="Xi Y."/>
            <person name="Qi Q."/>
            <person name="Li W."/>
            <person name="Zhang B."/>
            <person name="Hu W."/>
            <person name="Zhang Y."/>
            <person name="Tian X."/>
            <person name="Jiao Y."/>
            <person name="Liang X."/>
            <person name="Jin J."/>
            <person name="Gao L."/>
            <person name="Zheng W."/>
            <person name="Hao B."/>
            <person name="Liu S.-M."/>
            <person name="Wang W."/>
            <person name="Yuan L."/>
            <person name="Cao M."/>
            <person name="McDermott J."/>
            <person name="Samudrala R."/>
            <person name="Wang J."/>
            <person name="Wong G.K.-S."/>
            <person name="Yang H."/>
        </authorList>
    </citation>
    <scope>NUCLEOTIDE SEQUENCE [LARGE SCALE GENOMIC DNA]</scope>
    <source>
        <strain>cv. Nipponbare</strain>
    </source>
</reference>
<reference key="7">
    <citation type="journal article" date="2003" name="Science">
        <title>Collection, mapping, and annotation of over 28,000 cDNA clones from japonica rice.</title>
        <authorList>
            <consortium name="The rice full-length cDNA consortium"/>
        </authorList>
    </citation>
    <scope>NUCLEOTIDE SEQUENCE [LARGE SCALE MRNA]</scope>
    <source>
        <strain>cv. Nipponbare</strain>
    </source>
</reference>
<proteinExistence type="evidence at transcript level"/>
<sequence>MASLVAVQPVAVKGLAGSSISGRKLAVRPSPRALCRTTRRPRAAVVAKYGEKSVYFDLEDIGNTTGQWDLYGSDAPSPYNPLQSKFFETFAGPFTKRGLLLKFLLLGGGSLVAYVSASASPDLLPIKKGPQLPPTPGPRGKI</sequence>
<evidence type="ECO:0000250" key="1"/>
<evidence type="ECO:0000255" key="2"/>
<evidence type="ECO:0000305" key="3"/>
<evidence type="ECO:0000312" key="4">
    <source>
        <dbReference type="EMBL" id="EEE64669.1"/>
    </source>
</evidence>
<dbReference type="EMBL" id="AF093635">
    <property type="protein sequence ID" value="AAC78107.1"/>
    <property type="molecule type" value="mRNA"/>
</dbReference>
<dbReference type="EMBL" id="AC113333">
    <property type="protein sequence ID" value="AAU10639.1"/>
    <property type="molecule type" value="Genomic_DNA"/>
</dbReference>
<dbReference type="EMBL" id="AC144735">
    <property type="protein sequence ID" value="AAT85106.1"/>
    <property type="molecule type" value="Genomic_DNA"/>
</dbReference>
<dbReference type="EMBL" id="AP008211">
    <property type="protein sequence ID" value="BAF18218.1"/>
    <property type="molecule type" value="Genomic_DNA"/>
</dbReference>
<dbReference type="EMBL" id="AP014961">
    <property type="protein sequence ID" value="BAS95309.1"/>
    <property type="molecule type" value="Genomic_DNA"/>
</dbReference>
<dbReference type="EMBL" id="CM000142">
    <property type="protein sequence ID" value="EAZ35254.1"/>
    <property type="molecule type" value="Genomic_DNA"/>
</dbReference>
<dbReference type="EMBL" id="CM000142">
    <property type="protein sequence ID" value="EEE64669.1"/>
    <property type="molecule type" value="Genomic_DNA"/>
</dbReference>
<dbReference type="EMBL" id="AK060254">
    <property type="protein sequence ID" value="BAG87382.1"/>
    <property type="molecule type" value="mRNA"/>
</dbReference>
<dbReference type="EMBL" id="AK061603">
    <property type="protein sequence ID" value="BAG88034.1"/>
    <property type="molecule type" value="mRNA"/>
</dbReference>
<dbReference type="RefSeq" id="XP_015640606.1">
    <property type="nucleotide sequence ID" value="XM_015785120.1"/>
</dbReference>
<dbReference type="SMR" id="Q0DG05"/>
<dbReference type="FunCoup" id="Q0DG05">
    <property type="interactions" value="1049"/>
</dbReference>
<dbReference type="STRING" id="39947.Q0DG05"/>
<dbReference type="PaxDb" id="39947-Q0DG05"/>
<dbReference type="EnsemblPlants" id="Os05t0560000-01">
    <property type="protein sequence ID" value="Os05t0560000-01"/>
    <property type="gene ID" value="Os05g0560000"/>
</dbReference>
<dbReference type="Gramene" id="Os05t0560000-01">
    <property type="protein sequence ID" value="Os05t0560000-01"/>
    <property type="gene ID" value="Os05g0560000"/>
</dbReference>
<dbReference type="KEGG" id="dosa:Os05g0560000"/>
<dbReference type="eggNOG" id="ENOG502RXI9">
    <property type="taxonomic scope" value="Eukaryota"/>
</dbReference>
<dbReference type="HOGENOM" id="CLU_152855_0_0_1"/>
<dbReference type="InParanoid" id="Q0DG05"/>
<dbReference type="OMA" id="KWDLYGS"/>
<dbReference type="OrthoDB" id="496139at2759"/>
<dbReference type="Proteomes" id="UP000000763">
    <property type="component" value="Chromosome 5"/>
</dbReference>
<dbReference type="Proteomes" id="UP000007752">
    <property type="component" value="Chromosome 5"/>
</dbReference>
<dbReference type="Proteomes" id="UP000059680">
    <property type="component" value="Chromosome 5"/>
</dbReference>
<dbReference type="GO" id="GO:0009535">
    <property type="term" value="C:chloroplast thylakoid membrane"/>
    <property type="evidence" value="ECO:0007669"/>
    <property type="project" value="UniProtKB-SubCell"/>
</dbReference>
<dbReference type="GO" id="GO:0009538">
    <property type="term" value="C:photosystem I reaction center"/>
    <property type="evidence" value="ECO:0007669"/>
    <property type="project" value="InterPro"/>
</dbReference>
<dbReference type="GO" id="GO:0015979">
    <property type="term" value="P:photosynthesis"/>
    <property type="evidence" value="ECO:0007669"/>
    <property type="project" value="UniProtKB-KW"/>
</dbReference>
<dbReference type="FunFam" id="1.20.5.220:FF:000003">
    <property type="entry name" value="Photosystem I reaction center subunit VI"/>
    <property type="match status" value="1"/>
</dbReference>
<dbReference type="Gene3D" id="1.20.5.220">
    <property type="match status" value="1"/>
</dbReference>
<dbReference type="InterPro" id="IPR004928">
    <property type="entry name" value="PSI_PsaH"/>
</dbReference>
<dbReference type="PANTHER" id="PTHR34787">
    <property type="entry name" value="PHOTOSYSTEM I REACTION CENTER SUBUNIT VI-2, CHLOROPLASTIC"/>
    <property type="match status" value="1"/>
</dbReference>
<dbReference type="PANTHER" id="PTHR34787:SF1">
    <property type="entry name" value="PHOTOSYSTEM I REACTION CENTER SUBUNIT VI-2, CHLOROPLASTIC"/>
    <property type="match status" value="1"/>
</dbReference>
<dbReference type="Pfam" id="PF03244">
    <property type="entry name" value="PSI_PsaH"/>
    <property type="match status" value="1"/>
</dbReference>